<gene>
    <name evidence="1" type="primary">kdpA</name>
    <name type="ordered locus">Aaci_0251</name>
</gene>
<feature type="chain" id="PRO_0000166474" description="Potassium-transporting ATPase potassium-binding subunit">
    <location>
        <begin position="1"/>
        <end position="562"/>
    </location>
</feature>
<feature type="transmembrane region" description="Helical" evidence="1">
    <location>
        <begin position="5"/>
        <end position="25"/>
    </location>
</feature>
<feature type="transmembrane region" description="Helical" evidence="1">
    <location>
        <begin position="65"/>
        <end position="85"/>
    </location>
</feature>
<feature type="transmembrane region" description="Helical" evidence="1">
    <location>
        <begin position="135"/>
        <end position="155"/>
    </location>
</feature>
<feature type="transmembrane region" description="Helical" evidence="1">
    <location>
        <begin position="181"/>
        <end position="201"/>
    </location>
</feature>
<feature type="transmembrane region" description="Helical" evidence="1">
    <location>
        <begin position="257"/>
        <end position="277"/>
    </location>
</feature>
<feature type="transmembrane region" description="Helical" evidence="1">
    <location>
        <begin position="283"/>
        <end position="303"/>
    </location>
</feature>
<feature type="transmembrane region" description="Helical" evidence="1">
    <location>
        <begin position="331"/>
        <end position="351"/>
    </location>
</feature>
<feature type="transmembrane region" description="Helical" evidence="1">
    <location>
        <begin position="358"/>
        <end position="378"/>
    </location>
</feature>
<feature type="transmembrane region" description="Helical" evidence="1">
    <location>
        <begin position="381"/>
        <end position="401"/>
    </location>
</feature>
<feature type="transmembrane region" description="Helical" evidence="1">
    <location>
        <begin position="422"/>
        <end position="442"/>
    </location>
</feature>
<feature type="transmembrane region" description="Helical" evidence="1">
    <location>
        <begin position="486"/>
        <end position="506"/>
    </location>
</feature>
<feature type="transmembrane region" description="Helical" evidence="1">
    <location>
        <begin position="528"/>
        <end position="548"/>
    </location>
</feature>
<proteinExistence type="inferred from homology"/>
<dbReference type="EMBL" id="AJ243194">
    <property type="protein sequence ID" value="CAB45636.1"/>
    <property type="molecule type" value="Genomic_DNA"/>
</dbReference>
<dbReference type="EMBL" id="CP001727">
    <property type="protein sequence ID" value="ACV57313.1"/>
    <property type="molecule type" value="Genomic_DNA"/>
</dbReference>
<dbReference type="PIR" id="T43726">
    <property type="entry name" value="T43726"/>
</dbReference>
<dbReference type="RefSeq" id="WP_012809688.1">
    <property type="nucleotide sequence ID" value="NC_013205.1"/>
</dbReference>
<dbReference type="SMR" id="Q9XE11"/>
<dbReference type="STRING" id="521098.Aaci_0251"/>
<dbReference type="KEGG" id="aac:Aaci_0251"/>
<dbReference type="eggNOG" id="COG2060">
    <property type="taxonomic scope" value="Bacteria"/>
</dbReference>
<dbReference type="HOGENOM" id="CLU_018614_3_0_9"/>
<dbReference type="BRENDA" id="7.2.2.6">
    <property type="organism ID" value="243"/>
</dbReference>
<dbReference type="Proteomes" id="UP000001917">
    <property type="component" value="Chromosome"/>
</dbReference>
<dbReference type="GO" id="GO:0005886">
    <property type="term" value="C:plasma membrane"/>
    <property type="evidence" value="ECO:0007669"/>
    <property type="project" value="UniProtKB-SubCell"/>
</dbReference>
<dbReference type="GO" id="GO:0008556">
    <property type="term" value="F:P-type potassium transmembrane transporter activity"/>
    <property type="evidence" value="ECO:0007669"/>
    <property type="project" value="InterPro"/>
</dbReference>
<dbReference type="GO" id="GO:0030955">
    <property type="term" value="F:potassium ion binding"/>
    <property type="evidence" value="ECO:0007669"/>
    <property type="project" value="UniProtKB-UniRule"/>
</dbReference>
<dbReference type="HAMAP" id="MF_00275">
    <property type="entry name" value="KdpA"/>
    <property type="match status" value="1"/>
</dbReference>
<dbReference type="InterPro" id="IPR004623">
    <property type="entry name" value="KdpA"/>
</dbReference>
<dbReference type="NCBIfam" id="TIGR00680">
    <property type="entry name" value="kdpA"/>
    <property type="match status" value="1"/>
</dbReference>
<dbReference type="PANTHER" id="PTHR30607">
    <property type="entry name" value="POTASSIUM-TRANSPORTING ATPASE A CHAIN"/>
    <property type="match status" value="1"/>
</dbReference>
<dbReference type="PANTHER" id="PTHR30607:SF2">
    <property type="entry name" value="POTASSIUM-TRANSPORTING ATPASE POTASSIUM-BINDING SUBUNIT"/>
    <property type="match status" value="1"/>
</dbReference>
<dbReference type="Pfam" id="PF03814">
    <property type="entry name" value="KdpA"/>
    <property type="match status" value="1"/>
</dbReference>
<dbReference type="PIRSF" id="PIRSF001294">
    <property type="entry name" value="K_ATPaseA"/>
    <property type="match status" value="1"/>
</dbReference>
<protein>
    <recommendedName>
        <fullName evidence="1">Potassium-transporting ATPase potassium-binding subunit</fullName>
    </recommendedName>
    <alternativeName>
        <fullName evidence="1">ATP phosphohydrolase [potassium-transporting] A chain</fullName>
    </alternativeName>
    <alternativeName>
        <fullName evidence="1">Potassium-binding and translocating subunit A</fullName>
    </alternativeName>
    <alternativeName>
        <fullName evidence="1">Potassium-translocating ATPase A chain</fullName>
    </alternativeName>
</protein>
<accession>Q9XE11</accession>
<accession>C8WRA8</accession>
<name>KDPA_ALIAD</name>
<keyword id="KW-1003">Cell membrane</keyword>
<keyword id="KW-0406">Ion transport</keyword>
<keyword id="KW-0472">Membrane</keyword>
<keyword id="KW-0630">Potassium</keyword>
<keyword id="KW-0633">Potassium transport</keyword>
<keyword id="KW-1185">Reference proteome</keyword>
<keyword id="KW-0812">Transmembrane</keyword>
<keyword id="KW-1133">Transmembrane helix</keyword>
<keyword id="KW-0813">Transport</keyword>
<sequence length="562" mass="59777">MTLSGILAIFLVVLALVACAWPLGGYIYRTFVGERVRPDAVMVPVERAIYRLIGVNPEVEMDWKAYLRAMMVSNLVMALFAYAVFRLQGVLPLNPAHIPAMPPYLAFNTAASFITNTNWQNYAGEQSLSYLSQMIGITFLQFTSAATGLAAAMAFLRGLSRQKTDALGNFWVDLVKAHTRLLLPIAAILAVLLLALGVPETLSGPAVVHTLAGSMQTIARGPVATLEAIKQLGTNGGGFFNANSAHPFENPNAWTCILEIMGMGLIPTALVFTAGHFLRSRRLAIVLCTLLGAILLAGAYIVYAYEAAGNPILAHALGIHGPNMEGKEVRFGLPLTSLFVAATTAYTTGAVNAMHDSLMPLSGMVPLLFMMFNLIFGGKGVGLLNILMFLIIAVFISGLMVGRTPEIFGKKIEAREMKLATAAMLVHPFVILVPTAIAMALPSARASMGNPGLHGFTEVLYAFTSAAANNGSAFAGLNGNTPFYNISIGLVMLFGRYVSIIAMLAIAGSLAGKARIPETSGTLKVDTFAFGYVFVAVFIIVGALTFFPYLALGPIGEQLQLG</sequence>
<comment type="function">
    <text evidence="1">Part of the high-affinity ATP-driven potassium transport (or Kdp) system, which catalyzes the hydrolysis of ATP coupled with the electrogenic transport of potassium into the cytoplasm. This subunit binds the extracellular potassium ions and delivers the ions to the membrane domain of KdpB through an intramembrane tunnel.</text>
</comment>
<comment type="subunit">
    <text evidence="1">The system is composed of three essential subunits: KdpA, KdpB and KdpC.</text>
</comment>
<comment type="subcellular location">
    <subcellularLocation>
        <location evidence="1">Cell membrane</location>
        <topology evidence="1">Multi-pass membrane protein</topology>
    </subcellularLocation>
</comment>
<comment type="similarity">
    <text evidence="1">Belongs to the KdpA family.</text>
</comment>
<evidence type="ECO:0000255" key="1">
    <source>
        <dbReference type="HAMAP-Rule" id="MF_00275"/>
    </source>
</evidence>
<reference key="1">
    <citation type="submission" date="1999-06" db="EMBL/GenBank/DDBJ databases">
        <title>Nucleotide sequence and operon structure of the kdp region in Alicyclobacillus acidocaldarius.</title>
        <authorList>
            <person name="Schleussinger E."/>
            <person name="Schmid R."/>
            <person name="Bakker E.P."/>
        </authorList>
    </citation>
    <scope>NUCLEOTIDE SEQUENCE [GENOMIC DNA]</scope>
</reference>
<reference key="2">
    <citation type="submission" date="2009-09" db="EMBL/GenBank/DDBJ databases">
        <title>The complete chromosome of Alicyclobacillus acidocaldarius subsp. acidocaldarius DSM 446.</title>
        <authorList>
            <consortium name="US DOE Joint Genome Institute (JGI-PGF)"/>
            <person name="Lucas S."/>
            <person name="Copeland A."/>
            <person name="Lapidus A."/>
            <person name="Glavina del Rio T."/>
            <person name="Dalin E."/>
            <person name="Tice H."/>
            <person name="Bruce D."/>
            <person name="Goodwin L."/>
            <person name="Pitluck S."/>
            <person name="Kyrpides N."/>
            <person name="Mavromatis K."/>
            <person name="Ivanova N."/>
            <person name="Ovchinnikova G."/>
            <person name="Chertkov O."/>
            <person name="Sims D."/>
            <person name="Brettin T."/>
            <person name="Detter J.C."/>
            <person name="Han C."/>
            <person name="Larimer F."/>
            <person name="Land M."/>
            <person name="Hauser L."/>
            <person name="Markowitz V."/>
            <person name="Cheng J.-F."/>
            <person name="Hugenholtz P."/>
            <person name="Woyke T."/>
            <person name="Wu D."/>
            <person name="Pukall R."/>
            <person name="Klenk H.-P."/>
            <person name="Eisen J.A."/>
        </authorList>
    </citation>
    <scope>NUCLEOTIDE SEQUENCE [LARGE SCALE GENOMIC DNA]</scope>
    <source>
        <strain>ATCC 27009 / DSM 446 / BCRC 14685 / JCM 5260 / KCTC 1825 / NBRC 15652 / NCIMB 11725 / NRRL B-14509 / 104-IA</strain>
    </source>
</reference>
<organism>
    <name type="scientific">Alicyclobacillus acidocaldarius subsp. acidocaldarius (strain ATCC 27009 / DSM 446 / BCRC 14685 / JCM 5260 / KCTC 1825 / NBRC 15652 / NCIMB 11725 / NRRL B-14509 / 104-IA)</name>
    <name type="common">Bacillus acidocaldarius</name>
    <dbReference type="NCBI Taxonomy" id="521098"/>
    <lineage>
        <taxon>Bacteria</taxon>
        <taxon>Bacillati</taxon>
        <taxon>Bacillota</taxon>
        <taxon>Bacilli</taxon>
        <taxon>Bacillales</taxon>
        <taxon>Alicyclobacillaceae</taxon>
        <taxon>Alicyclobacillus</taxon>
    </lineage>
</organism>